<comment type="function">
    <text evidence="2 5 6 8 13 14">Rab effector protein acting as linker between gamma-adaptin, RAB4A and RAB5A. Involved in endocytic membrane fusion and membrane trafficking of recycling endosomes. Involved in KCNH1 channels trafficking to and from the cell membrane (PubMed:22841712). Stimulates RABGEF1 mediated nucleotide exchange on RAB5A. Mediates the traffic of PKD1:PKD2 complex from the endoplasmic reticulum through the Golgi to the cilium (By similarity).</text>
</comment>
<comment type="subunit">
    <text evidence="1 2 5 6 7 8 9 10 11 12 14 15 17">Homodimer when bound to RAB5A (PubMed:15378032). Heterodimer with RABGEF1 (PubMed:11452015, PubMed:9323142). The heterodimer binds RAB4A and RAB5A that have been activated by GTP-binding (PubMed:10698684, PubMed:12773381, PubMed:20098723, PubMed:8521472). Interacts with TSC2 (PubMed:9045618). Interacts with GGA1 (via GAE domain), GGA2 (via GAE domain) and GGA3 (via GAE domain) (PubMed:12505986, PubMed:14665628). Interacts with AP1G1 (via GAE domain) (PubMed:12505986, PubMed:12773381, PubMed:14665628). Interacts with AP1G2 (via GAE domain) (PubMed:12505986, PubMed:14665628). Interacts with ECPAS (PubMed:20682791). Interacts with KCNH1 (By similarity). Interacts with PKD1 (via C-terminal domain) and GGA1; the interactions recruit PKD1:PKD2 complex to GGA1 and ARL3 at trans-Golgi network (By similarity).</text>
</comment>
<comment type="interaction">
    <interactant intactId="EBI-447043">
        <id>Q15276</id>
    </interactant>
    <interactant intactId="EBI-11096309">
        <id>Q9NYB9-2</id>
        <label>ABI2</label>
    </interactant>
    <organismsDiffer>false</organismsDiffer>
    <experiments>3</experiments>
</comment>
<comment type="interaction">
    <interactant intactId="EBI-447043">
        <id>Q15276</id>
    </interactant>
    <interactant intactId="EBI-745226">
        <id>Q13155</id>
        <label>AIMP2</label>
    </interactant>
    <organismsDiffer>false</organismsDiffer>
    <experiments>3</experiments>
</comment>
<comment type="interaction">
    <interactant intactId="EBI-447043">
        <id>Q15276</id>
    </interactant>
    <interactant intactId="EBI-447609">
        <id>O43747</id>
        <label>AP1G1</label>
    </interactant>
    <organismsDiffer>false</organismsDiffer>
    <experiments>2</experiments>
</comment>
<comment type="interaction">
    <interactant intactId="EBI-447043">
        <id>Q15276</id>
    </interactant>
    <interactant intactId="EBI-373637">
        <id>O75843</id>
        <label>AP1G2</label>
    </interactant>
    <organismsDiffer>false</organismsDiffer>
    <experiments>2</experiments>
</comment>
<comment type="interaction">
    <interactant intactId="EBI-447043">
        <id>Q15276</id>
    </interactant>
    <interactant intactId="EBI-473181">
        <id>Q99728</id>
        <label>BARD1</label>
    </interactant>
    <organismsDiffer>false</organismsDiffer>
    <experiments>3</experiments>
</comment>
<comment type="interaction">
    <interactant intactId="EBI-447043">
        <id>Q15276</id>
    </interactant>
    <interactant intactId="EBI-744556">
        <id>Q96HB5</id>
        <label>CCDC120</label>
    </interactant>
    <organismsDiffer>false</organismsDiffer>
    <experiments>3</experiments>
</comment>
<comment type="interaction">
    <interactant intactId="EBI-447043">
        <id>Q15276</id>
    </interactant>
    <interactant intactId="EBI-930143">
        <id>Q6P1J9</id>
        <label>CDC73</label>
    </interactant>
    <organismsDiffer>false</organismsDiffer>
    <experiments>3</experiments>
</comment>
<comment type="interaction">
    <interactant intactId="EBI-447043">
        <id>Q15276</id>
    </interactant>
    <interactant intactId="EBI-746238">
        <id>Q07002</id>
        <label>CDK18</label>
    </interactant>
    <organismsDiffer>false</organismsDiffer>
    <experiments>3</experiments>
</comment>
<comment type="interaction">
    <interactant intactId="EBI-447043">
        <id>Q15276</id>
    </interactant>
    <interactant intactId="EBI-3919850">
        <id>Q8IVW4</id>
        <label>CDKL3</label>
    </interactant>
    <organismsDiffer>false</organismsDiffer>
    <experiments>3</experiments>
</comment>
<comment type="interaction">
    <interactant intactId="EBI-447043">
        <id>Q15276</id>
    </interactant>
    <interactant intactId="EBI-11752486">
        <id>Q86XR8-3</id>
        <label>CEP57</label>
    </interactant>
    <organismsDiffer>false</organismsDiffer>
    <experiments>3</experiments>
</comment>
<comment type="interaction">
    <interactant intactId="EBI-447043">
        <id>Q15276</id>
    </interactant>
    <interactant intactId="EBI-742422">
        <id>Q96M91</id>
        <label>CFAP53</label>
    </interactant>
    <organismsDiffer>false</organismsDiffer>
    <experiments>3</experiments>
</comment>
<comment type="interaction">
    <interactant intactId="EBI-447043">
        <id>Q15276</id>
    </interactant>
    <interactant intactId="EBI-742350">
        <id>Q14241</id>
        <label>ELOA</label>
    </interactant>
    <organismsDiffer>false</organismsDiffer>
    <experiments>3</experiments>
</comment>
<comment type="interaction">
    <interactant intactId="EBI-447043">
        <id>Q15276</id>
    </interactant>
    <interactant intactId="EBI-3951849">
        <id>Q56NI9</id>
        <label>ESCO2</label>
    </interactant>
    <organismsDiffer>false</organismsDiffer>
    <experiments>3</experiments>
</comment>
<comment type="interaction">
    <interactant intactId="EBI-447043">
        <id>Q15276</id>
    </interactant>
    <interactant intactId="EBI-742802">
        <id>Q9Y247</id>
        <label>FAM50B</label>
    </interactant>
    <organismsDiffer>false</organismsDiffer>
    <experiments>3</experiments>
</comment>
<comment type="interaction">
    <interactant intactId="EBI-447043">
        <id>Q15276</id>
    </interactant>
    <interactant intactId="EBI-6658203">
        <id>Q86YD7</id>
        <label>FAM90A1</label>
    </interactant>
    <organismsDiffer>false</organismsDiffer>
    <experiments>3</experiments>
</comment>
<comment type="interaction">
    <interactant intactId="EBI-447043">
        <id>Q15276</id>
    </interactant>
    <interactant intactId="EBI-447141">
        <id>Q9UJY5</id>
        <label>GGA1</label>
    </interactant>
    <organismsDiffer>false</organismsDiffer>
    <experiments>8</experiments>
</comment>
<comment type="interaction">
    <interactant intactId="EBI-447043">
        <id>Q15276</id>
    </interactant>
    <interactant intactId="EBI-447646">
        <id>Q9UJY4</id>
        <label>GGA2</label>
    </interactant>
    <organismsDiffer>false</organismsDiffer>
    <experiments>8</experiments>
</comment>
<comment type="interaction">
    <interactant intactId="EBI-447043">
        <id>Q15276</id>
    </interactant>
    <interactant intactId="EBI-447404">
        <id>Q9NZ52</id>
        <label>GGA3</label>
    </interactant>
    <organismsDiffer>false</organismsDiffer>
    <experiments>12</experiments>
</comment>
<comment type="interaction">
    <interactant intactId="EBI-447043">
        <id>Q15276</id>
    </interactant>
    <interactant intactId="EBI-726510">
        <id>Q96BZ8</id>
        <label>LENG1</label>
    </interactant>
    <organismsDiffer>false</organismsDiffer>
    <experiments>3</experiments>
</comment>
<comment type="interaction">
    <interactant intactId="EBI-447043">
        <id>Q15276</id>
    </interactant>
    <interactant intactId="EBI-10317491">
        <id>Q9NZL9</id>
        <label>MAT2B</label>
    </interactant>
    <organismsDiffer>false</organismsDiffer>
    <experiments>3</experiments>
</comment>
<comment type="interaction">
    <interactant intactId="EBI-447043">
        <id>Q15276</id>
    </interactant>
    <interactant intactId="EBI-348259">
        <id>Q96EZ8</id>
        <label>MCRS1</label>
    </interactant>
    <organismsDiffer>false</organismsDiffer>
    <experiments>3</experiments>
</comment>
<comment type="interaction">
    <interactant intactId="EBI-447043">
        <id>Q15276</id>
    </interactant>
    <interactant intactId="EBI-8466445">
        <id>A5D8V7</id>
        <label>ODAD3</label>
    </interactant>
    <organismsDiffer>false</organismsDiffer>
    <experiments>3</experiments>
</comment>
<comment type="interaction">
    <interactant intactId="EBI-447043">
        <id>Q15276</id>
    </interactant>
    <interactant intactId="EBI-448407">
        <id>Q9HAT8</id>
        <label>PELI2</label>
    </interactant>
    <organismsDiffer>false</organismsDiffer>
    <experiments>3</experiments>
</comment>
<comment type="interaction">
    <interactant intactId="EBI-447043">
        <id>Q15276</id>
    </interactant>
    <interactant intactId="EBI-10987518">
        <id>Q99959-2</id>
        <label>PKP2</label>
    </interactant>
    <organismsDiffer>false</organismsDiffer>
    <experiments>3</experiments>
</comment>
<comment type="interaction">
    <interactant intactId="EBI-447043">
        <id>Q15276</id>
    </interactant>
    <interactant intactId="EBI-744322">
        <id>O43395</id>
        <label>PRPF3</label>
    </interactant>
    <organismsDiffer>false</organismsDiffer>
    <experiments>3</experiments>
</comment>
<comment type="interaction">
    <interactant intactId="EBI-447043">
        <id>Q15276</id>
    </interactant>
    <interactant intactId="EBI-722284">
        <id>P20338</id>
        <label>RAB4A</label>
    </interactant>
    <organismsDiffer>false</organismsDiffer>
    <experiments>3</experiments>
</comment>
<comment type="interaction">
    <interactant intactId="EBI-447043">
        <id>Q15276</id>
    </interactant>
    <interactant intactId="EBI-10218066">
        <id>P61018</id>
        <label>RAB4B</label>
    </interactant>
    <organismsDiffer>false</organismsDiffer>
    <experiments>3</experiments>
</comment>
<comment type="interaction">
    <interactant intactId="EBI-447043">
        <id>Q15276</id>
    </interactant>
    <interactant intactId="EBI-913954">
        <id>Q9UJ41</id>
        <label>RABGEF1</label>
    </interactant>
    <organismsDiffer>false</organismsDiffer>
    <experiments>3</experiments>
</comment>
<comment type="interaction">
    <interactant intactId="EBI-447043">
        <id>Q15276</id>
    </interactant>
    <interactant intactId="EBI-6448458">
        <id>Q9UJ41-2</id>
        <label>RABGEF1</label>
    </interactant>
    <organismsDiffer>false</organismsDiffer>
    <experiments>2</experiments>
</comment>
<comment type="interaction">
    <interactant intactId="EBI-447043">
        <id>Q15276</id>
    </interactant>
    <interactant intactId="EBI-12235180">
        <id>Q9H2S5</id>
        <label>RNF39</label>
    </interactant>
    <organismsDiffer>false</organismsDiffer>
    <experiments>3</experiments>
</comment>
<comment type="interaction">
    <interactant intactId="EBI-447043">
        <id>Q15276</id>
    </interactant>
    <interactant intactId="EBI-632715">
        <id>Q13573</id>
        <label>SNW1</label>
    </interactant>
    <organismsDiffer>false</organismsDiffer>
    <experiments>3</experiments>
</comment>
<comment type="interaction">
    <interactant intactId="EBI-447043">
        <id>Q15276</id>
    </interactant>
    <interactant intactId="EBI-722932">
        <id>P49675</id>
        <label>STAR</label>
    </interactant>
    <organismsDiffer>false</organismsDiffer>
    <experiments>3</experiments>
</comment>
<comment type="interaction">
    <interactant intactId="EBI-447043">
        <id>Q15276</id>
    </interactant>
    <interactant intactId="EBI-7543499">
        <id>Q8IZW8</id>
        <label>TNS4</label>
    </interactant>
    <organismsDiffer>false</organismsDiffer>
    <experiments>3</experiments>
</comment>
<comment type="interaction">
    <interactant intactId="EBI-447043">
        <id>Q15276</id>
    </interactant>
    <interactant intactId="EBI-11119202">
        <id>Q9UL33-2</id>
        <label>TRAPPC2L</label>
    </interactant>
    <organismsDiffer>false</organismsDiffer>
    <experiments>3</experiments>
</comment>
<comment type="interaction">
    <interactant intactId="EBI-447043">
        <id>Q15276</id>
    </interactant>
    <interactant intactId="EBI-10687282">
        <id>Q9NRE2</id>
        <label>TSHZ2</label>
    </interactant>
    <organismsDiffer>false</organismsDiffer>
    <experiments>3</experiments>
</comment>
<comment type="interaction">
    <interactant intactId="EBI-447043">
        <id>Q15276</id>
    </interactant>
    <interactant intactId="EBI-17208936">
        <id>P0CB47</id>
        <label>UBTFL1</label>
    </interactant>
    <organismsDiffer>false</organismsDiffer>
    <experiments>3</experiments>
</comment>
<comment type="interaction">
    <interactant intactId="EBI-447043">
        <id>Q15276</id>
    </interactant>
    <interactant intactId="EBI-743272">
        <id>O75604</id>
        <label>USP2</label>
    </interactant>
    <organismsDiffer>false</organismsDiffer>
    <experiments>3</experiments>
</comment>
<comment type="interaction">
    <interactant intactId="EBI-447043">
        <id>Q15276</id>
    </interactant>
    <interactant intactId="EBI-11737646">
        <id>Q5TAP6</id>
        <label>UTP14C</label>
    </interactant>
    <organismsDiffer>false</organismsDiffer>
    <experiments>3</experiments>
</comment>
<comment type="interaction">
    <interactant intactId="EBI-447043">
        <id>Q15276</id>
    </interactant>
    <interactant intactId="EBI-712969">
        <id>Q9Y3C0</id>
        <label>WASHC3</label>
    </interactant>
    <organismsDiffer>false</organismsDiffer>
    <experiments>3</experiments>
</comment>
<comment type="interaction">
    <interactant intactId="EBI-447043">
        <id>Q15276</id>
    </interactant>
    <interactant intactId="EBI-11962468">
        <id>Q7Z4V0</id>
        <label>ZNF438</label>
    </interactant>
    <organismsDiffer>false</organismsDiffer>
    <experiments>3</experiments>
</comment>
<comment type="interaction">
    <interactant intactId="EBI-447043">
        <id>Q15276</id>
    </interactant>
    <interactant intactId="EBI-1049952">
        <id>Q96KM6</id>
        <label>ZNF512B</label>
    </interactant>
    <organismsDiffer>false</organismsDiffer>
    <experiments>3</experiments>
</comment>
<comment type="interaction">
    <interactant intactId="EBI-447043">
        <id>Q15276</id>
    </interactant>
    <interactant intactId="EBI-10251462">
        <id>Q6NX45</id>
        <label>ZNF774</label>
    </interactant>
    <organismsDiffer>false</organismsDiffer>
    <experiments>3</experiments>
</comment>
<comment type="interaction">
    <interactant intactId="EBI-447043">
        <id>Q15276</id>
    </interactant>
    <interactant intactId="EBI-2845098">
        <id>P68590</id>
        <label>yscH</label>
    </interactant>
    <organismsDiffer>true</organismsDiffer>
    <experiments>2</experiments>
</comment>
<comment type="subcellular location">
    <subcellularLocation>
        <location>Cytoplasm</location>
    </subcellularLocation>
    <subcellularLocation>
        <location>Early endosome</location>
    </subcellularLocation>
    <subcellularLocation>
        <location>Recycling endosome</location>
    </subcellularLocation>
    <subcellularLocation>
        <location>Cytoplasmic vesicle</location>
    </subcellularLocation>
</comment>
<comment type="alternative products">
    <event type="alternative splicing"/>
    <isoform>
        <id>Q15276-1</id>
        <name>1</name>
        <name>Rabaptin-5</name>
        <sequence type="displayed"/>
    </isoform>
    <isoform>
        <id>Q15276-2</id>
        <name>2</name>
        <name>Rabaptin-4</name>
        <sequence type="described" ref="VSP_010451"/>
    </isoform>
</comment>
<comment type="PTM">
    <text evidence="16">Proteolytic cleavage by caspases in apoptotic cells causes loss of endosome fusion activity.</text>
</comment>
<comment type="similarity">
    <text evidence="19">Belongs to the rabaptin family.</text>
</comment>
<name>RABE1_HUMAN</name>
<organism>
    <name type="scientific">Homo sapiens</name>
    <name type="common">Human</name>
    <dbReference type="NCBI Taxonomy" id="9606"/>
    <lineage>
        <taxon>Eukaryota</taxon>
        <taxon>Metazoa</taxon>
        <taxon>Chordata</taxon>
        <taxon>Craniata</taxon>
        <taxon>Vertebrata</taxon>
        <taxon>Euteleostomi</taxon>
        <taxon>Mammalia</taxon>
        <taxon>Eutheria</taxon>
        <taxon>Euarchontoglires</taxon>
        <taxon>Primates</taxon>
        <taxon>Haplorrhini</taxon>
        <taxon>Catarrhini</taxon>
        <taxon>Hominidae</taxon>
        <taxon>Homo</taxon>
    </lineage>
</organism>
<keyword id="KW-0002">3D-structure</keyword>
<keyword id="KW-0007">Acetylation</keyword>
<keyword id="KW-0025">Alternative splicing</keyword>
<keyword id="KW-0053">Apoptosis</keyword>
<keyword id="KW-0175">Coiled coil</keyword>
<keyword id="KW-0963">Cytoplasm</keyword>
<keyword id="KW-0968">Cytoplasmic vesicle</keyword>
<keyword id="KW-0903">Direct protein sequencing</keyword>
<keyword id="KW-0254">Endocytosis</keyword>
<keyword id="KW-0967">Endosome</keyword>
<keyword id="KW-0597">Phosphoprotein</keyword>
<keyword id="KW-0653">Protein transport</keyword>
<keyword id="KW-1267">Proteomics identification</keyword>
<keyword id="KW-1185">Reference proteome</keyword>
<keyword id="KW-0813">Transport</keyword>
<feature type="initiator methionine" description="Removed" evidence="22 27">
    <location>
        <position position="1"/>
    </location>
</feature>
<feature type="chain" id="PRO_0000187556" description="Rab GTPase-binding effector protein 1">
    <location>
        <begin position="2"/>
        <end position="862"/>
    </location>
</feature>
<feature type="region of interest" description="Disordered" evidence="4">
    <location>
        <begin position="315"/>
        <end position="338"/>
    </location>
</feature>
<feature type="region of interest" description="Interaction with AP1G1, AP1G2, GGA1, GGA2 and GGA3" evidence="9">
    <location>
        <begin position="435"/>
        <end position="447"/>
    </location>
</feature>
<feature type="coiled-coil region" evidence="3">
    <location>
        <begin position="11"/>
        <end position="345"/>
    </location>
</feature>
<feature type="coiled-coil region" evidence="3">
    <location>
        <begin position="534"/>
        <end position="816"/>
    </location>
</feature>
<feature type="modified residue" description="N-acetylalanine" evidence="22 27">
    <location>
        <position position="2"/>
    </location>
</feature>
<feature type="modified residue" description="N6-acetyllysine" evidence="23">
    <location>
        <position position="282"/>
    </location>
</feature>
<feature type="modified residue" description="Phosphoserine" evidence="29">
    <location>
        <position position="374"/>
    </location>
</feature>
<feature type="modified residue" description="Phosphoserine" evidence="28">
    <location>
        <position position="377"/>
    </location>
</feature>
<feature type="modified residue" description="Phosphoserine" evidence="20 21 24 25 26 28 29">
    <location>
        <position position="407"/>
    </location>
</feature>
<feature type="modified residue" description="Phosphothreonine" evidence="29">
    <location>
        <position position="408"/>
    </location>
</feature>
<feature type="modified residue" description="Phosphoserine" evidence="21 25 26 28 29">
    <location>
        <position position="410"/>
    </location>
</feature>
<feature type="splice variant" id="VSP_010451" description="In isoform 2." evidence="18">
    <location>
        <begin position="758"/>
        <end position="790"/>
    </location>
</feature>
<feature type="sequence variant" id="VAR_028106" description="In dbSNP:rs3026099.">
    <original>E</original>
    <variation>G</variation>
    <location>
        <position position="640"/>
    </location>
</feature>
<feature type="mutagenesis site" description="Abolishes the interaction with AP1G1, AP1G2, GGA1, GGA2 and GGA3." evidence="9">
    <original>F</original>
    <variation>A</variation>
    <variation>V</variation>
    <variation>I</variation>
    <variation>M</variation>
    <variation>L</variation>
    <location>
        <position position="439"/>
    </location>
</feature>
<feature type="mutagenesis site" description="Abolishes the interaction with AP1G1, AP1G2, GGA1, GGA2 and GGA3." evidence="9">
    <original>G</original>
    <variation>A</variation>
    <variation>E</variation>
    <variation>V</variation>
    <variation>S</variation>
    <location>
        <position position="440"/>
    </location>
</feature>
<feature type="mutagenesis site" description="Reduces the interaction with AP1G1 and GGA3." evidence="9">
    <original>P</original>
    <variation>A</variation>
    <variation>D</variation>
    <variation>E</variation>
    <location>
        <position position="441"/>
    </location>
</feature>
<feature type="mutagenesis site" description="Abolishes the interaction with AP1G2, GGA1 and GGA2." evidence="9">
    <original>P</original>
    <variation>A</variation>
    <location>
        <position position="441"/>
    </location>
</feature>
<feature type="mutagenesis site" description="Reduces the interaction with AP1G2, GGA1, GGA2." evidence="9">
    <original>P</original>
    <variation>D</variation>
    <variation>E</variation>
    <location>
        <position position="441"/>
    </location>
</feature>
<feature type="mutagenesis site" description="Abolishes the interaction with AP1G1, AP1G2, GGA1, GGA2 and GGA3." evidence="9">
    <original>P</original>
    <variation>K</variation>
    <variation>F</variation>
    <variation>G</variation>
    <variation>V</variation>
    <location>
        <position position="441"/>
    </location>
</feature>
<feature type="mutagenesis site" description="Abolishes the interaction with AP1G1, AP1G2, GGA1, GGA2 and GGA3." evidence="9">
    <original>L</original>
    <variation>A</variation>
    <variation>V</variation>
    <variation>I</variation>
    <location>
        <position position="442"/>
    </location>
</feature>
<feature type="mutagenesis site" description="No effect on RAB5A binding affinity." evidence="10">
    <original>D</original>
    <variation>K</variation>
    <location>
        <position position="812"/>
    </location>
</feature>
<feature type="mutagenesis site" description="No effect on RAB5A binding affinity." evidence="10">
    <original>E</original>
    <variation>K</variation>
    <location>
        <position position="815"/>
    </location>
</feature>
<feature type="mutagenesis site" description="Strongly decreases RAB5A binding affinity." evidence="10">
    <original>Q</original>
    <variation>W</variation>
    <location>
        <position position="818"/>
    </location>
</feature>
<feature type="mutagenesis site" description="Strongly decreases RAB5A binding affinity." evidence="10">
    <original>D</original>
    <variation>K</variation>
    <location>
        <position position="820"/>
    </location>
</feature>
<feature type="mutagenesis site" description="Strongly decreases RAB5A binding affinity." evidence="10">
    <original>F</original>
    <variation>R</variation>
    <location>
        <position position="821"/>
    </location>
</feature>
<feature type="mutagenesis site" description="Strongly decreases RAB5A binding affinity." evidence="10">
    <original>V</original>
    <variation>D</variation>
    <location>
        <position position="822"/>
    </location>
</feature>
<feature type="mutagenesis site" description="Strongly decreases RAB5A binding affinity." evidence="10">
    <original>Q</original>
    <variation>A</variation>
    <location>
        <position position="826"/>
    </location>
</feature>
<feature type="mutagenesis site" description="Strongly decreases RAB5A binding affinity." evidence="10">
    <original>Q</original>
    <variation>A</variation>
    <location>
        <position position="829"/>
    </location>
</feature>
<feature type="sequence conflict" description="In Ref. 1; CAA62580 and 2; AAC70781." evidence="19" ref="1 2">
    <original>S</original>
    <variation>Y</variation>
    <location>
        <position position="149"/>
    </location>
</feature>
<feature type="sequence conflict" description="In Ref. 3; BAG36864." evidence="19" ref="3">
    <original>M</original>
    <variation>I</variation>
    <location>
        <position position="628"/>
    </location>
</feature>
<feature type="helix" evidence="31">
    <location>
        <begin position="553"/>
        <end position="633"/>
    </location>
</feature>
<feature type="helix" evidence="30">
    <location>
        <begin position="805"/>
        <end position="836"/>
    </location>
</feature>
<feature type="helix" evidence="30">
    <location>
        <begin position="841"/>
        <end position="847"/>
    </location>
</feature>
<reference key="1">
    <citation type="journal article" date="1995" name="Cell">
        <title>Rabaptin-5 is a direct effector of the small GTPase Rab5 in endocytic membrane fusion.</title>
        <authorList>
            <person name="Stenmark H."/>
            <person name="Vitale G."/>
            <person name="Ulrich O."/>
            <person name="Zerial M."/>
        </authorList>
    </citation>
    <scope>NUCLEOTIDE SEQUENCE [MRNA] (ISOFORM 1)</scope>
    <scope>FUNCTION</scope>
    <scope>SUBCELLULAR LOCATION</scope>
    <scope>INTERACTION WITH RAB5A</scope>
    <source>
        <tissue>Cervix carcinoma</tissue>
    </source>
</reference>
<reference key="2">
    <citation type="journal article" date="2000" name="Biochem. J.">
        <title>Rabaptin4, a novel effector of the small GTPase rab4a, is recruited to perinuclear recycling vesicles.</title>
        <authorList>
            <person name="Nagelkerken B."/>
            <person name="van Anken E."/>
            <person name="van Raak M."/>
            <person name="Gerez L."/>
            <person name="Mohrmann K."/>
            <person name="van Uden N."/>
            <person name="Holthuizen J."/>
            <person name="Pelkmans L."/>
            <person name="van der Sluijs P."/>
        </authorList>
    </citation>
    <scope>NUCLEOTIDE SEQUENCE [MRNA] (ISOFORM 2)</scope>
    <scope>FUNCTION</scope>
    <scope>SUBCELLULAR LOCATION</scope>
    <scope>INTERACTION WITH RAB4A AND RAB5A</scope>
    <source>
        <tissue>Cervix carcinoma</tissue>
    </source>
</reference>
<reference key="3">
    <citation type="journal article" date="2004" name="Nat. Genet.">
        <title>Complete sequencing and characterization of 21,243 full-length human cDNAs.</title>
        <authorList>
            <person name="Ota T."/>
            <person name="Suzuki Y."/>
            <person name="Nishikawa T."/>
            <person name="Otsuki T."/>
            <person name="Sugiyama T."/>
            <person name="Irie R."/>
            <person name="Wakamatsu A."/>
            <person name="Hayashi K."/>
            <person name="Sato H."/>
            <person name="Nagai K."/>
            <person name="Kimura K."/>
            <person name="Makita H."/>
            <person name="Sekine M."/>
            <person name="Obayashi M."/>
            <person name="Nishi T."/>
            <person name="Shibahara T."/>
            <person name="Tanaka T."/>
            <person name="Ishii S."/>
            <person name="Yamamoto J."/>
            <person name="Saito K."/>
            <person name="Kawai Y."/>
            <person name="Isono Y."/>
            <person name="Nakamura Y."/>
            <person name="Nagahari K."/>
            <person name="Murakami K."/>
            <person name="Yasuda T."/>
            <person name="Iwayanagi T."/>
            <person name="Wagatsuma M."/>
            <person name="Shiratori A."/>
            <person name="Sudo H."/>
            <person name="Hosoiri T."/>
            <person name="Kaku Y."/>
            <person name="Kodaira H."/>
            <person name="Kondo H."/>
            <person name="Sugawara M."/>
            <person name="Takahashi M."/>
            <person name="Kanda K."/>
            <person name="Yokoi T."/>
            <person name="Furuya T."/>
            <person name="Kikkawa E."/>
            <person name="Omura Y."/>
            <person name="Abe K."/>
            <person name="Kamihara K."/>
            <person name="Katsuta N."/>
            <person name="Sato K."/>
            <person name="Tanikawa M."/>
            <person name="Yamazaki M."/>
            <person name="Ninomiya K."/>
            <person name="Ishibashi T."/>
            <person name="Yamashita H."/>
            <person name="Murakawa K."/>
            <person name="Fujimori K."/>
            <person name="Tanai H."/>
            <person name="Kimata M."/>
            <person name="Watanabe M."/>
            <person name="Hiraoka S."/>
            <person name="Chiba Y."/>
            <person name="Ishida S."/>
            <person name="Ono Y."/>
            <person name="Takiguchi S."/>
            <person name="Watanabe S."/>
            <person name="Yosida M."/>
            <person name="Hotuta T."/>
            <person name="Kusano J."/>
            <person name="Kanehori K."/>
            <person name="Takahashi-Fujii A."/>
            <person name="Hara H."/>
            <person name="Tanase T.-O."/>
            <person name="Nomura Y."/>
            <person name="Togiya S."/>
            <person name="Komai F."/>
            <person name="Hara R."/>
            <person name="Takeuchi K."/>
            <person name="Arita M."/>
            <person name="Imose N."/>
            <person name="Musashino K."/>
            <person name="Yuuki H."/>
            <person name="Oshima A."/>
            <person name="Sasaki N."/>
            <person name="Aotsuka S."/>
            <person name="Yoshikawa Y."/>
            <person name="Matsunawa H."/>
            <person name="Ichihara T."/>
            <person name="Shiohata N."/>
            <person name="Sano S."/>
            <person name="Moriya S."/>
            <person name="Momiyama H."/>
            <person name="Satoh N."/>
            <person name="Takami S."/>
            <person name="Terashima Y."/>
            <person name="Suzuki O."/>
            <person name="Nakagawa S."/>
            <person name="Senoh A."/>
            <person name="Mizoguchi H."/>
            <person name="Goto Y."/>
            <person name="Shimizu F."/>
            <person name="Wakebe H."/>
            <person name="Hishigaki H."/>
            <person name="Watanabe T."/>
            <person name="Sugiyama A."/>
            <person name="Takemoto M."/>
            <person name="Kawakami B."/>
            <person name="Yamazaki M."/>
            <person name="Watanabe K."/>
            <person name="Kumagai A."/>
            <person name="Itakura S."/>
            <person name="Fukuzumi Y."/>
            <person name="Fujimori Y."/>
            <person name="Komiyama M."/>
            <person name="Tashiro H."/>
            <person name="Tanigami A."/>
            <person name="Fujiwara T."/>
            <person name="Ono T."/>
            <person name="Yamada K."/>
            <person name="Fujii Y."/>
            <person name="Ozaki K."/>
            <person name="Hirao M."/>
            <person name="Ohmori Y."/>
            <person name="Kawabata A."/>
            <person name="Hikiji T."/>
            <person name="Kobatake N."/>
            <person name="Inagaki H."/>
            <person name="Ikema Y."/>
            <person name="Okamoto S."/>
            <person name="Okitani R."/>
            <person name="Kawakami T."/>
            <person name="Noguchi S."/>
            <person name="Itoh T."/>
            <person name="Shigeta K."/>
            <person name="Senba T."/>
            <person name="Matsumura K."/>
            <person name="Nakajima Y."/>
            <person name="Mizuno T."/>
            <person name="Morinaga M."/>
            <person name="Sasaki M."/>
            <person name="Togashi T."/>
            <person name="Oyama M."/>
            <person name="Hata H."/>
            <person name="Watanabe M."/>
            <person name="Komatsu T."/>
            <person name="Mizushima-Sugano J."/>
            <person name="Satoh T."/>
            <person name="Shirai Y."/>
            <person name="Takahashi Y."/>
            <person name="Nakagawa K."/>
            <person name="Okumura K."/>
            <person name="Nagase T."/>
            <person name="Nomura N."/>
            <person name="Kikuchi H."/>
            <person name="Masuho Y."/>
            <person name="Yamashita R."/>
            <person name="Nakai K."/>
            <person name="Yada T."/>
            <person name="Nakamura Y."/>
            <person name="Ohara O."/>
            <person name="Isogai T."/>
            <person name="Sugano S."/>
        </authorList>
    </citation>
    <scope>NUCLEOTIDE SEQUENCE [LARGE SCALE MRNA] (ISOFORM 1)</scope>
    <source>
        <tissue>Brain</tissue>
    </source>
</reference>
<reference key="4">
    <citation type="journal article" date="2004" name="Genome Res.">
        <title>The status, quality, and expansion of the NIH full-length cDNA project: the Mammalian Gene Collection (MGC).</title>
        <authorList>
            <consortium name="The MGC Project Team"/>
        </authorList>
    </citation>
    <scope>NUCLEOTIDE SEQUENCE [LARGE SCALE MRNA] (ISOFORM 1)</scope>
    <source>
        <tissue>Testis</tissue>
    </source>
</reference>
<reference key="5">
    <citation type="submission" date="2008-12" db="UniProtKB">
        <authorList>
            <person name="Lubec G."/>
            <person name="Chen W.-Q."/>
            <person name="Sun Y."/>
        </authorList>
    </citation>
    <scope>PROTEIN SEQUENCE OF 807-819</scope>
    <scope>IDENTIFICATION BY MASS SPECTROMETRY</scope>
    <source>
        <tissue>Fetal brain cortex</tissue>
    </source>
</reference>
<reference key="6">
    <citation type="journal article" date="1997" name="Cell">
        <title>A novel Rab5 GDP/GTP exchange factor complexed to Rabaptin-5 links nucleotide exchange to effector recruitment and function.</title>
        <authorList>
            <person name="Horiuchi H."/>
            <person name="Lippe R."/>
            <person name="McBride H.M."/>
            <person name="Rubino M."/>
            <person name="Woodman P."/>
            <person name="Stenmark H."/>
            <person name="Rybin V."/>
            <person name="Wilm M."/>
            <person name="Ashman K."/>
            <person name="Mann M."/>
            <person name="Zerial M."/>
        </authorList>
    </citation>
    <scope>INTERACTION WITH RABGEF1</scope>
</reference>
<reference key="7">
    <citation type="journal article" date="1997" name="EMBO J.">
        <title>Cleavage of rabaptin-5 blocks endosome fusion during apoptosis.</title>
        <authorList>
            <person name="Cosulich S.C."/>
            <person name="Horiuchi H."/>
            <person name="Zerial M."/>
            <person name="Clarke P.R."/>
            <person name="Woodman P.G."/>
        </authorList>
    </citation>
    <scope>PROTEOLYTIC CLEAVAGE BY CASPASES IN APOPTOTIC CELLS</scope>
</reference>
<reference key="8">
    <citation type="journal article" date="1997" name="J. Biol. Chem.">
        <title>The tuberous sclerosis 2 gene product, tuberin, functions as a Rab5 GTPase activating protein (GAP) in modulating endocytosis.</title>
        <authorList>
            <person name="Xiao G.-H."/>
            <person name="Shoarinejad F."/>
            <person name="Jin F."/>
            <person name="Golemis E.A."/>
            <person name="Yeung R.S."/>
        </authorList>
    </citation>
    <scope>INTERACTION WITH TSC2</scope>
</reference>
<reference key="9">
    <citation type="journal article" date="1999" name="Int. J. Cancer">
        <title>Antigens recognized by autologous antibody in patients with renal-cell carcinoma.</title>
        <authorList>
            <person name="Scanlan M.J."/>
            <person name="Gordan J.D."/>
            <person name="Williamson B."/>
            <person name="Stockert E."/>
            <person name="Bander N.H."/>
            <person name="Jongeneel C.V."/>
            <person name="Gure A.O."/>
            <person name="Jaeger D."/>
            <person name="Jaeger E."/>
            <person name="Knuth A."/>
            <person name="Chen Y.-T."/>
            <person name="Old L.J."/>
        </authorList>
    </citation>
    <scope>IDENTIFICATION AS A RENAL CANCER ANTIGEN</scope>
    <source>
        <tissue>Renal cell carcinoma</tissue>
    </source>
</reference>
<reference key="10">
    <citation type="journal article" date="2001" name="Mol. Biol. Cell">
        <title>Functional synergy between Rab5 effector Rabaptin-5 and exchange factor Rabex-5 when physically associated in a complex.</title>
        <authorList>
            <person name="Lippe R."/>
            <person name="Miaczynska M."/>
            <person name="Rybin V."/>
            <person name="Runge A."/>
            <person name="Zerial M."/>
        </authorList>
    </citation>
    <scope>FUNCTION</scope>
    <scope>INTERACTION WITH RABGEF1</scope>
</reference>
<reference key="11">
    <citation type="journal article" date="2003" name="EMBO J.">
        <title>Divalent interaction of the GGAs with the Rabaptin-5-Rabex-5 complex.</title>
        <authorList>
            <person name="Mattera R."/>
            <person name="Arighi C.N."/>
            <person name="Lodge R."/>
            <person name="Zerial M."/>
            <person name="Bonifacino J.S."/>
        </authorList>
    </citation>
    <scope>INTERACTION WITH GGA1; GGA2; GGA3; AP1G1 AND AP1G2</scope>
    <scope>SUBCELLULAR LOCATION</scope>
</reference>
<reference key="12">
    <citation type="journal article" date="2003" name="EMBO J.">
        <title>Rabaptin-5alpha/rabaptin-4 serves as a linker between rab4 and gamma(1)-adaptin in membrane recycling from endosomes.</title>
        <authorList>
            <person name="Deneka M."/>
            <person name="Neeft M."/>
            <person name="Popa I."/>
            <person name="van Oort M."/>
            <person name="Sprong H."/>
            <person name="Oorschot V."/>
            <person name="Klumperman J."/>
            <person name="Schu P."/>
            <person name="van der Sluijs P."/>
        </authorList>
    </citation>
    <scope>FUNCTION</scope>
    <scope>INTERACTION WITH RAB4A AND AP1G1</scope>
    <scope>SUBCELLULAR LOCATION</scope>
</reference>
<reference key="13">
    <citation type="journal article" date="2004" name="J. Biol. Chem.">
        <title>Definition of the consensus motif recognized by gamma-adaptin ear domains.</title>
        <authorList>
            <person name="Mattera R."/>
            <person name="Ritter B."/>
            <person name="Sidhu S.S."/>
            <person name="McPherson P.S."/>
            <person name="Bonifacino J.S."/>
        </authorList>
    </citation>
    <scope>INTERACTION WITH AP1G1; AP1G2; GGA1; GGA2 AND GGA3</scope>
    <scope>MUTAGENESIS OF PHE-439; GLY-440; PRO-441 AND LEU-442</scope>
</reference>
<reference key="14">
    <citation type="journal article" date="2006" name="Nat. Biotechnol.">
        <title>A probability-based approach for high-throughput protein phosphorylation analysis and site localization.</title>
        <authorList>
            <person name="Beausoleil S.A."/>
            <person name="Villen J."/>
            <person name="Gerber S.A."/>
            <person name="Rush J."/>
            <person name="Gygi S.P."/>
        </authorList>
    </citation>
    <scope>PHOSPHORYLATION [LARGE SCALE ANALYSIS] AT SER-407</scope>
    <scope>IDENTIFICATION BY MASS SPECTROMETRY [LARGE SCALE ANALYSIS]</scope>
    <source>
        <tissue>Cervix carcinoma</tissue>
    </source>
</reference>
<reference key="15">
    <citation type="journal article" date="2008" name="J. Proteome Res.">
        <title>Phosphoproteome of resting human platelets.</title>
        <authorList>
            <person name="Zahedi R.P."/>
            <person name="Lewandrowski U."/>
            <person name="Wiesner J."/>
            <person name="Wortelkamp S."/>
            <person name="Moebius J."/>
            <person name="Schuetz C."/>
            <person name="Walter U."/>
            <person name="Gambaryan S."/>
            <person name="Sickmann A."/>
        </authorList>
    </citation>
    <scope>IDENTIFICATION BY MASS SPECTROMETRY [LARGE SCALE ANALYSIS]</scope>
    <source>
        <tissue>Platelet</tissue>
    </source>
</reference>
<reference key="16">
    <citation type="journal article" date="2008" name="Proc. Natl. Acad. Sci. U.S.A.">
        <title>A quantitative atlas of mitotic phosphorylation.</title>
        <authorList>
            <person name="Dephoure N."/>
            <person name="Zhou C."/>
            <person name="Villen J."/>
            <person name="Beausoleil S.A."/>
            <person name="Bakalarski C.E."/>
            <person name="Elledge S.J."/>
            <person name="Gygi S.P."/>
        </authorList>
    </citation>
    <scope>PHOSPHORYLATION [LARGE SCALE ANALYSIS] AT SER-407 AND SER-410</scope>
    <scope>IDENTIFICATION BY MASS SPECTROMETRY [LARGE SCALE ANALYSIS]</scope>
    <source>
        <tissue>Cervix carcinoma</tissue>
    </source>
</reference>
<reference key="17">
    <citation type="journal article" date="2009" name="Anal. Chem.">
        <title>Lys-N and trypsin cover complementary parts of the phosphoproteome in a refined SCX-based approach.</title>
        <authorList>
            <person name="Gauci S."/>
            <person name="Helbig A.O."/>
            <person name="Slijper M."/>
            <person name="Krijgsveld J."/>
            <person name="Heck A.J."/>
            <person name="Mohammed S."/>
        </authorList>
    </citation>
    <scope>ACETYLATION [LARGE SCALE ANALYSIS] AT ALA-2</scope>
    <scope>CLEAVAGE OF INITIATOR METHIONINE [LARGE SCALE ANALYSIS]</scope>
    <scope>IDENTIFICATION BY MASS SPECTROMETRY [LARGE SCALE ANALYSIS]</scope>
</reference>
<reference key="18">
    <citation type="journal article" date="2009" name="Sci. Signal.">
        <title>Quantitative phosphoproteomic analysis of T cell receptor signaling reveals system-wide modulation of protein-protein interactions.</title>
        <authorList>
            <person name="Mayya V."/>
            <person name="Lundgren D.H."/>
            <person name="Hwang S.-I."/>
            <person name="Rezaul K."/>
            <person name="Wu L."/>
            <person name="Eng J.K."/>
            <person name="Rodionov V."/>
            <person name="Han D.K."/>
        </authorList>
    </citation>
    <scope>PHOSPHORYLATION [LARGE SCALE ANALYSIS] AT SER-407</scope>
    <scope>IDENTIFICATION BY MASS SPECTROMETRY [LARGE SCALE ANALYSIS]</scope>
    <source>
        <tissue>Leukemic T-cell</tissue>
    </source>
</reference>
<reference key="19">
    <citation type="journal article" date="2009" name="Science">
        <title>Lysine acetylation targets protein complexes and co-regulates major cellular functions.</title>
        <authorList>
            <person name="Choudhary C."/>
            <person name="Kumar C."/>
            <person name="Gnad F."/>
            <person name="Nielsen M.L."/>
            <person name="Rehman M."/>
            <person name="Walther T.C."/>
            <person name="Olsen J.V."/>
            <person name="Mann M."/>
        </authorList>
    </citation>
    <scope>ACETYLATION [LARGE SCALE ANALYSIS] AT LYS-282</scope>
    <scope>IDENTIFICATION BY MASS SPECTROMETRY [LARGE SCALE ANALYSIS]</scope>
</reference>
<reference key="20">
    <citation type="journal article" date="2010" name="J. Biol. Chem.">
        <title>A protein interaction network for Ecm29 links the 26 S proteasome to molecular motors and endosomal components.</title>
        <authorList>
            <person name="Gorbea C."/>
            <person name="Pratt G."/>
            <person name="Ustrell V."/>
            <person name="Bell R."/>
            <person name="Sahasrabudhe S."/>
            <person name="Hughes R.E."/>
            <person name="Rechsteiner M."/>
        </authorList>
    </citation>
    <scope>SUBCELLULAR LOCATION</scope>
    <scope>INTERACTION WITH ECPAS</scope>
</reference>
<reference key="21">
    <citation type="journal article" date="2010" name="PLoS Biol.">
        <title>Neuron specific Rab4 effector GRASP-1 coordinates membrane specialization and maturation of recycling endosomes.</title>
        <authorList>
            <person name="Hoogenraad C.C."/>
            <person name="Popa I."/>
            <person name="Futai K."/>
            <person name="Martinez-Sanchez E."/>
            <person name="Sanchez-Martinez E."/>
            <person name="Wulf P.S."/>
            <person name="van Vlijmen T."/>
            <person name="Dortland B.R."/>
            <person name="Oorschot V."/>
            <person name="Govers R."/>
            <person name="Monti M."/>
            <person name="Heck A.J."/>
            <person name="Sheng M."/>
            <person name="Klumperman J."/>
            <person name="Rehmann H."/>
            <person name="Jaarsma D."/>
            <person name="Kapitein L.C."/>
            <person name="van der Sluijs P."/>
        </authorList>
    </citation>
    <scope>INTERACTION WITH RAB4A</scope>
</reference>
<reference key="22">
    <citation type="journal article" date="2010" name="Sci. Signal.">
        <title>Quantitative phosphoproteomics reveals widespread full phosphorylation site occupancy during mitosis.</title>
        <authorList>
            <person name="Olsen J.V."/>
            <person name="Vermeulen M."/>
            <person name="Santamaria A."/>
            <person name="Kumar C."/>
            <person name="Miller M.L."/>
            <person name="Jensen L.J."/>
            <person name="Gnad F."/>
            <person name="Cox J."/>
            <person name="Jensen T.S."/>
            <person name="Nigg E.A."/>
            <person name="Brunak S."/>
            <person name="Mann M."/>
        </authorList>
    </citation>
    <scope>PHOSPHORYLATION [LARGE SCALE ANALYSIS] AT SER-407 AND SER-410</scope>
    <scope>IDENTIFICATION BY MASS SPECTROMETRY [LARGE SCALE ANALYSIS]</scope>
    <source>
        <tissue>Cervix carcinoma</tissue>
    </source>
</reference>
<reference key="23">
    <citation type="journal article" date="2011" name="BMC Syst. Biol.">
        <title>Initial characterization of the human central proteome.</title>
        <authorList>
            <person name="Burkard T.R."/>
            <person name="Planyavsky M."/>
            <person name="Kaupe I."/>
            <person name="Breitwieser F.P."/>
            <person name="Buerckstuemmer T."/>
            <person name="Bennett K.L."/>
            <person name="Superti-Furga G."/>
            <person name="Colinge J."/>
        </authorList>
    </citation>
    <scope>IDENTIFICATION BY MASS SPECTROMETRY [LARGE SCALE ANALYSIS]</scope>
</reference>
<reference key="24">
    <citation type="journal article" date="2011" name="Sci. Signal.">
        <title>System-wide temporal characterization of the proteome and phosphoproteome of human embryonic stem cell differentiation.</title>
        <authorList>
            <person name="Rigbolt K.T."/>
            <person name="Prokhorova T.A."/>
            <person name="Akimov V."/>
            <person name="Henningsen J."/>
            <person name="Johansen P.T."/>
            <person name="Kratchmarova I."/>
            <person name="Kassem M."/>
            <person name="Mann M."/>
            <person name="Olsen J.V."/>
            <person name="Blagoev B."/>
        </authorList>
    </citation>
    <scope>PHOSPHORYLATION [LARGE SCALE ANALYSIS] AT SER-407 AND SER-410</scope>
    <scope>IDENTIFICATION BY MASS SPECTROMETRY [LARGE SCALE ANALYSIS]</scope>
</reference>
<reference key="25">
    <citation type="journal article" date="2012" name="FEBS Lett.">
        <title>Physical and functional interaction of KV10.1 with Rabaptin-5 impacts ion channel trafficking.</title>
        <authorList>
            <person name="Ninkovic M."/>
            <person name="Mitkovski M."/>
            <person name="Kohl T."/>
            <person name="Stuhmer W."/>
            <person name="Pardo L.A."/>
        </authorList>
    </citation>
    <scope>FUNCTION</scope>
</reference>
<reference key="26">
    <citation type="journal article" date="2012" name="Proc. Natl. Acad. Sci. U.S.A.">
        <title>N-terminal acetylome analyses and functional insights of the N-terminal acetyltransferase NatB.</title>
        <authorList>
            <person name="Van Damme P."/>
            <person name="Lasa M."/>
            <person name="Polevoda B."/>
            <person name="Gazquez C."/>
            <person name="Elosegui-Artola A."/>
            <person name="Kim D.S."/>
            <person name="De Juan-Pardo E."/>
            <person name="Demeyer K."/>
            <person name="Hole K."/>
            <person name="Larrea E."/>
            <person name="Timmerman E."/>
            <person name="Prieto J."/>
            <person name="Arnesen T."/>
            <person name="Sherman F."/>
            <person name="Gevaert K."/>
            <person name="Aldabe R."/>
        </authorList>
    </citation>
    <scope>ACETYLATION [LARGE SCALE ANALYSIS] AT ALA-2</scope>
    <scope>CLEAVAGE OF INITIATOR METHIONINE [LARGE SCALE ANALYSIS]</scope>
    <scope>IDENTIFICATION BY MASS SPECTROMETRY [LARGE SCALE ANALYSIS]</scope>
</reference>
<reference key="27">
    <citation type="journal article" date="2013" name="J. Proteome Res.">
        <title>Toward a comprehensive characterization of a human cancer cell phosphoproteome.</title>
        <authorList>
            <person name="Zhou H."/>
            <person name="Di Palma S."/>
            <person name="Preisinger C."/>
            <person name="Peng M."/>
            <person name="Polat A.N."/>
            <person name="Heck A.J."/>
            <person name="Mohammed S."/>
        </authorList>
    </citation>
    <scope>PHOSPHORYLATION [LARGE SCALE ANALYSIS] AT SER-377; SER-407 AND SER-410</scope>
    <scope>IDENTIFICATION BY MASS SPECTROMETRY [LARGE SCALE ANALYSIS]</scope>
    <source>
        <tissue>Cervix carcinoma</tissue>
        <tissue>Erythroleukemia</tissue>
    </source>
</reference>
<reference key="28">
    <citation type="journal article" date="2014" name="J. Proteomics">
        <title>An enzyme assisted RP-RPLC approach for in-depth analysis of human liver phosphoproteome.</title>
        <authorList>
            <person name="Bian Y."/>
            <person name="Song C."/>
            <person name="Cheng K."/>
            <person name="Dong M."/>
            <person name="Wang F."/>
            <person name="Huang J."/>
            <person name="Sun D."/>
            <person name="Wang L."/>
            <person name="Ye M."/>
            <person name="Zou H."/>
        </authorList>
    </citation>
    <scope>PHOSPHORYLATION [LARGE SCALE ANALYSIS] AT SER-374; SER-407; THR-408 AND SER-410</scope>
    <scope>IDENTIFICATION BY MASS SPECTROMETRY [LARGE SCALE ANALYSIS]</scope>
    <source>
        <tissue>Liver</tissue>
    </source>
</reference>
<reference key="29">
    <citation type="journal article" date="2004" name="Nat. Struct. Mol. Biol.">
        <title>Structural basis of Rab5-Rabaptin5 interaction in endocytosis.</title>
        <authorList>
            <person name="Zhu G."/>
            <person name="Zhai P."/>
            <person name="Liu J."/>
            <person name="Terzyan S."/>
            <person name="Li G."/>
            <person name="Zhang X.C."/>
        </authorList>
    </citation>
    <scope>X-RAY CRYSTALLOGRAPHY (2.31 ANGSTROMS) OF 789-862 IN COMPLEX WITH RAB5A</scope>
    <scope>SUBUNIT</scope>
    <scope>MUTAGENESIS OF ASP-812; GLU-815; GLN-818; ASP-820; PHE-821; VAL-822; GLN-826 AND GLN-829</scope>
</reference>
<protein>
    <recommendedName>
        <fullName>Rab GTPase-binding effector protein 1</fullName>
    </recommendedName>
    <alternativeName>
        <fullName>Rabaptin-4</fullName>
    </alternativeName>
    <alternativeName>
        <fullName>Rabaptin-5</fullName>
    </alternativeName>
    <alternativeName>
        <fullName>Rabaptin-5alpha</fullName>
    </alternativeName>
    <alternativeName>
        <fullName>Renal carcinoma antigen NY-REN-17</fullName>
    </alternativeName>
</protein>
<sequence>MAQPGPASQPDVSLQQRVAELEKINAEFLRAQQQLEQEFNQKRAKFKELYLAKEEDLKRQNAVLQAAQDDLGHLRTQLWEAQAEMENIKAIATVSENTKQEAIDEVKRQWREEVASLQAVMKETVRDYEHQFHLRLEQERTQWAQYRESAEREIADLRRRLSEGQEEENLENEMKKAQEDAEKLRSVVMPMEKEIAALKDKLTEAEDKIKELEASKVKELNHYLEAEKSCRTDLEMYVAVLNTQKSVLQEDAEKLRKELHEVCHLLEQERQQHNQLKHTWQKANDQFLESQRLLMRDMQRMEIVLTSEQLRQVEELKKKDQEDDEQQRLNKRKDHKKADVEEEIKIPVVCALTQEESSAQLSNEEEHLDSTRGSVHSLDAGLLLPSGDPFSKSDNDMFKDGLRRAQSTDSLGTSGSLQSKALGYNYKAKSAGNLDESDFGPLVGADSVSENFDTASLGSLQMPSGFMLTKDQERAIKAMTPEQEETASLLSSVTQGMESAYVSPSGYRLVSETEWNLLQKEVHNAGNKLGRRCDMCSNYEKQLQGIQIQEAETRDQVKKLQLMLRQANDQLEKTMKDKQELEDFIKQSSEDSSHQISALVLRAQASEILLEELQQGLSQAKRDVQEQMAVLMQSREQVSEELVRLQKDNDSLQGKHSLHVSLQQAEDFILPDTTEALRELVLKYREDIINVRTAADHVEEKLKAEILFLKEQIQAEQCLKENLEETLQLEIENCKEEIASISSLKAELERIKVEKGQLESTLREKSQQLESLQEIKISLEEQLKKETAAKATVEQLMFEEKNKAQRLQTELDVSEQVQRDFVKLSQTLQVQLERIRQADSLERIRAILNDTKLTDINQLPET</sequence>
<accession>Q15276</accession>
<accession>B2RAG7</accession>
<accession>O95369</accession>
<accession>Q8IVX3</accession>
<evidence type="ECO:0000250" key="1">
    <source>
        <dbReference type="UniProtKB" id="O35550"/>
    </source>
</evidence>
<evidence type="ECO:0000250" key="2">
    <source>
        <dbReference type="UniProtKB" id="O35551"/>
    </source>
</evidence>
<evidence type="ECO:0000255" key="3"/>
<evidence type="ECO:0000256" key="4">
    <source>
        <dbReference type="SAM" id="MobiDB-lite"/>
    </source>
</evidence>
<evidence type="ECO:0000269" key="5">
    <source>
    </source>
</evidence>
<evidence type="ECO:0000269" key="6">
    <source>
    </source>
</evidence>
<evidence type="ECO:0000269" key="7">
    <source>
    </source>
</evidence>
<evidence type="ECO:0000269" key="8">
    <source>
    </source>
</evidence>
<evidence type="ECO:0000269" key="9">
    <source>
    </source>
</evidence>
<evidence type="ECO:0000269" key="10">
    <source>
    </source>
</evidence>
<evidence type="ECO:0000269" key="11">
    <source>
    </source>
</evidence>
<evidence type="ECO:0000269" key="12">
    <source>
    </source>
</evidence>
<evidence type="ECO:0000269" key="13">
    <source>
    </source>
</evidence>
<evidence type="ECO:0000269" key="14">
    <source>
    </source>
</evidence>
<evidence type="ECO:0000269" key="15">
    <source>
    </source>
</evidence>
<evidence type="ECO:0000269" key="16">
    <source>
    </source>
</evidence>
<evidence type="ECO:0000269" key="17">
    <source>
    </source>
</evidence>
<evidence type="ECO:0000303" key="18">
    <source>
    </source>
</evidence>
<evidence type="ECO:0000305" key="19"/>
<evidence type="ECO:0007744" key="20">
    <source>
    </source>
</evidence>
<evidence type="ECO:0007744" key="21">
    <source>
    </source>
</evidence>
<evidence type="ECO:0007744" key="22">
    <source>
    </source>
</evidence>
<evidence type="ECO:0007744" key="23">
    <source>
    </source>
</evidence>
<evidence type="ECO:0007744" key="24">
    <source>
    </source>
</evidence>
<evidence type="ECO:0007744" key="25">
    <source>
    </source>
</evidence>
<evidence type="ECO:0007744" key="26">
    <source>
    </source>
</evidence>
<evidence type="ECO:0007744" key="27">
    <source>
    </source>
</evidence>
<evidence type="ECO:0007744" key="28">
    <source>
    </source>
</evidence>
<evidence type="ECO:0007744" key="29">
    <source>
    </source>
</evidence>
<evidence type="ECO:0007829" key="30">
    <source>
        <dbReference type="PDB" id="1TU3"/>
    </source>
</evidence>
<evidence type="ECO:0007829" key="31">
    <source>
        <dbReference type="PDB" id="4N3Y"/>
    </source>
</evidence>
<dbReference type="EMBL" id="X91141">
    <property type="protein sequence ID" value="CAA62580.1"/>
    <property type="molecule type" value="mRNA"/>
</dbReference>
<dbReference type="EMBL" id="AF098638">
    <property type="protein sequence ID" value="AAC70781.1"/>
    <property type="molecule type" value="mRNA"/>
</dbReference>
<dbReference type="EMBL" id="AK314183">
    <property type="protein sequence ID" value="BAG36864.1"/>
    <property type="molecule type" value="mRNA"/>
</dbReference>
<dbReference type="EMBL" id="BC041700">
    <property type="protein sequence ID" value="AAH41700.1"/>
    <property type="molecule type" value="mRNA"/>
</dbReference>
<dbReference type="CCDS" id="CCDS42243.1">
    <molecule id="Q15276-2"/>
</dbReference>
<dbReference type="CCDS" id="CCDS45592.1">
    <molecule id="Q15276-1"/>
</dbReference>
<dbReference type="RefSeq" id="NP_001077054.1">
    <molecule id="Q15276-2"/>
    <property type="nucleotide sequence ID" value="NM_001083585.3"/>
</dbReference>
<dbReference type="RefSeq" id="NP_001278510.1">
    <property type="nucleotide sequence ID" value="NM_001291581.1"/>
</dbReference>
<dbReference type="RefSeq" id="NP_004694.2">
    <molecule id="Q15276-1"/>
    <property type="nucleotide sequence ID" value="NM_004703.5"/>
</dbReference>
<dbReference type="PDB" id="1P4U">
    <property type="method" value="X-ray"/>
    <property type="resolution" value="2.20 A"/>
    <property type="chains" value="B=435-447"/>
</dbReference>
<dbReference type="PDB" id="1TU3">
    <property type="method" value="X-ray"/>
    <property type="resolution" value="2.31 A"/>
    <property type="chains" value="F/G/H/I/J=789-862"/>
</dbReference>
<dbReference type="PDB" id="1X79">
    <property type="method" value="X-ray"/>
    <property type="resolution" value="2.41 A"/>
    <property type="chains" value="B/C=551-661"/>
</dbReference>
<dbReference type="PDB" id="4N3Y">
    <property type="method" value="X-ray"/>
    <property type="resolution" value="2.20 A"/>
    <property type="chains" value="B/C=552-642"/>
</dbReference>
<dbReference type="PDB" id="4N3Z">
    <property type="method" value="X-ray"/>
    <property type="resolution" value="3.10 A"/>
    <property type="chains" value="B/C=552-642"/>
</dbReference>
<dbReference type="PDB" id="4Q9U">
    <property type="method" value="X-ray"/>
    <property type="resolution" value="4.62 A"/>
    <property type="chains" value="C/D/G/H=552-642"/>
</dbReference>
<dbReference type="PDBsum" id="1P4U"/>
<dbReference type="PDBsum" id="1TU3"/>
<dbReference type="PDBsum" id="1X79"/>
<dbReference type="PDBsum" id="4N3Y"/>
<dbReference type="PDBsum" id="4N3Z"/>
<dbReference type="PDBsum" id="4Q9U"/>
<dbReference type="SMR" id="Q15276"/>
<dbReference type="BioGRID" id="114583">
    <property type="interactions" value="200"/>
</dbReference>
<dbReference type="CORUM" id="Q15276"/>
<dbReference type="DIP" id="DIP-29350N"/>
<dbReference type="FunCoup" id="Q15276">
    <property type="interactions" value="1959"/>
</dbReference>
<dbReference type="IntAct" id="Q15276">
    <property type="interactions" value="113"/>
</dbReference>
<dbReference type="MINT" id="Q15276"/>
<dbReference type="STRING" id="9606.ENSP00000445408"/>
<dbReference type="GlyGen" id="Q15276">
    <property type="glycosylation" value="1 site, 1 N-linked glycan (1 site)"/>
</dbReference>
<dbReference type="iPTMnet" id="Q15276"/>
<dbReference type="MetOSite" id="Q15276"/>
<dbReference type="PhosphoSitePlus" id="Q15276"/>
<dbReference type="BioMuta" id="RABEP1"/>
<dbReference type="DMDM" id="116242743"/>
<dbReference type="jPOST" id="Q15276"/>
<dbReference type="MassIVE" id="Q15276"/>
<dbReference type="PaxDb" id="9606-ENSP00000445408"/>
<dbReference type="PeptideAtlas" id="Q15276"/>
<dbReference type="ProteomicsDB" id="60509">
    <molecule id="Q15276-1"/>
</dbReference>
<dbReference type="ProteomicsDB" id="60510">
    <molecule id="Q15276-2"/>
</dbReference>
<dbReference type="Pumba" id="Q15276"/>
<dbReference type="Antibodypedia" id="3875">
    <property type="antibodies" value="118 antibodies from 27 providers"/>
</dbReference>
<dbReference type="DNASU" id="9135"/>
<dbReference type="Ensembl" id="ENST00000341923.10">
    <molecule id="Q15276-2"/>
    <property type="protein sequence ID" value="ENSP00000339569.6"/>
    <property type="gene ID" value="ENSG00000029725.17"/>
</dbReference>
<dbReference type="Ensembl" id="ENST00000537505.6">
    <molecule id="Q15276-1"/>
    <property type="protein sequence ID" value="ENSP00000445408.2"/>
    <property type="gene ID" value="ENSG00000029725.17"/>
</dbReference>
<dbReference type="GeneID" id="9135"/>
<dbReference type="KEGG" id="hsa:9135"/>
<dbReference type="MANE-Select" id="ENST00000537505.6">
    <property type="protein sequence ID" value="ENSP00000445408.2"/>
    <property type="RefSeq nucleotide sequence ID" value="NM_004703.6"/>
    <property type="RefSeq protein sequence ID" value="NP_004694.2"/>
</dbReference>
<dbReference type="UCSC" id="uc032ery.2">
    <molecule id="Q15276-1"/>
    <property type="organism name" value="human"/>
</dbReference>
<dbReference type="AGR" id="HGNC:17677"/>
<dbReference type="CTD" id="9135"/>
<dbReference type="DisGeNET" id="9135"/>
<dbReference type="GeneCards" id="RABEP1"/>
<dbReference type="HGNC" id="HGNC:17677">
    <property type="gene designation" value="RABEP1"/>
</dbReference>
<dbReference type="HPA" id="ENSG00000029725">
    <property type="expression patterns" value="Low tissue specificity"/>
</dbReference>
<dbReference type="MIM" id="603616">
    <property type="type" value="gene"/>
</dbReference>
<dbReference type="neXtProt" id="NX_Q15276"/>
<dbReference type="OpenTargets" id="ENSG00000029725"/>
<dbReference type="PharmGKB" id="PA134884097"/>
<dbReference type="VEuPathDB" id="HostDB:ENSG00000029725"/>
<dbReference type="eggNOG" id="KOG0993">
    <property type="taxonomic scope" value="Eukaryota"/>
</dbReference>
<dbReference type="GeneTree" id="ENSGT00530000063743"/>
<dbReference type="HOGENOM" id="CLU_016882_0_0_1"/>
<dbReference type="InParanoid" id="Q15276"/>
<dbReference type="OMA" id="XDLKRQN"/>
<dbReference type="OrthoDB" id="79940at2759"/>
<dbReference type="PAN-GO" id="Q15276">
    <property type="GO annotations" value="3 GO annotations based on evolutionary models"/>
</dbReference>
<dbReference type="PhylomeDB" id="Q15276"/>
<dbReference type="TreeFam" id="TF329365"/>
<dbReference type="PathwayCommons" id="Q15276"/>
<dbReference type="Reactome" id="R-HSA-8854214">
    <property type="pathway name" value="TBC/RABGAPs"/>
</dbReference>
<dbReference type="SignaLink" id="Q15276"/>
<dbReference type="SIGNOR" id="Q15276"/>
<dbReference type="BioGRID-ORCS" id="9135">
    <property type="hits" value="17 hits in 1151 CRISPR screens"/>
</dbReference>
<dbReference type="ChiTaRS" id="RABEP1">
    <property type="organism name" value="human"/>
</dbReference>
<dbReference type="EvolutionaryTrace" id="Q15276"/>
<dbReference type="GeneWiki" id="RABEP1"/>
<dbReference type="GenomeRNAi" id="9135"/>
<dbReference type="Pharos" id="Q15276">
    <property type="development level" value="Tbio"/>
</dbReference>
<dbReference type="PRO" id="PR:Q15276"/>
<dbReference type="Proteomes" id="UP000005640">
    <property type="component" value="Chromosome 17"/>
</dbReference>
<dbReference type="RNAct" id="Q15276">
    <property type="molecule type" value="protein"/>
</dbReference>
<dbReference type="Bgee" id="ENSG00000029725">
    <property type="expression patterns" value="Expressed in skeletal muscle tissue of rectus abdominis and 190 other cell types or tissues"/>
</dbReference>
<dbReference type="ExpressionAtlas" id="Q15276">
    <property type="expression patterns" value="baseline and differential"/>
</dbReference>
<dbReference type="GO" id="GO:0005829">
    <property type="term" value="C:cytosol"/>
    <property type="evidence" value="ECO:0000314"/>
    <property type="project" value="HPA"/>
</dbReference>
<dbReference type="GO" id="GO:0005769">
    <property type="term" value="C:early endosome"/>
    <property type="evidence" value="ECO:0000304"/>
    <property type="project" value="ProtInc"/>
</dbReference>
<dbReference type="GO" id="GO:0031901">
    <property type="term" value="C:early endosome membrane"/>
    <property type="evidence" value="ECO:0000304"/>
    <property type="project" value="Reactome"/>
</dbReference>
<dbReference type="GO" id="GO:0030139">
    <property type="term" value="C:endocytic vesicle"/>
    <property type="evidence" value="ECO:0000314"/>
    <property type="project" value="UniProtKB"/>
</dbReference>
<dbReference type="GO" id="GO:0005768">
    <property type="term" value="C:endosome"/>
    <property type="evidence" value="ECO:0000314"/>
    <property type="project" value="UniProtKB"/>
</dbReference>
<dbReference type="GO" id="GO:0098978">
    <property type="term" value="C:glutamatergic synapse"/>
    <property type="evidence" value="ECO:0007669"/>
    <property type="project" value="Ensembl"/>
</dbReference>
<dbReference type="GO" id="GO:0043231">
    <property type="term" value="C:intracellular membrane-bounded organelle"/>
    <property type="evidence" value="ECO:0000314"/>
    <property type="project" value="HPA"/>
</dbReference>
<dbReference type="GO" id="GO:0032991">
    <property type="term" value="C:protein-containing complex"/>
    <property type="evidence" value="ECO:0000315"/>
    <property type="project" value="CAFA"/>
</dbReference>
<dbReference type="GO" id="GO:0055037">
    <property type="term" value="C:recycling endosome"/>
    <property type="evidence" value="ECO:0007669"/>
    <property type="project" value="UniProtKB-SubCell"/>
</dbReference>
<dbReference type="GO" id="GO:0008083">
    <property type="term" value="F:growth factor activity"/>
    <property type="evidence" value="ECO:0007669"/>
    <property type="project" value="InterPro"/>
</dbReference>
<dbReference type="GO" id="GO:0005096">
    <property type="term" value="F:GTPase activator activity"/>
    <property type="evidence" value="ECO:0007669"/>
    <property type="project" value="InterPro"/>
</dbReference>
<dbReference type="GO" id="GO:0019904">
    <property type="term" value="F:protein domain specific binding"/>
    <property type="evidence" value="ECO:0000353"/>
    <property type="project" value="CAFA"/>
</dbReference>
<dbReference type="GO" id="GO:0042803">
    <property type="term" value="F:protein homodimerization activity"/>
    <property type="evidence" value="ECO:0000353"/>
    <property type="project" value="UniProtKB"/>
</dbReference>
<dbReference type="GO" id="GO:0006915">
    <property type="term" value="P:apoptotic process"/>
    <property type="evidence" value="ECO:0007669"/>
    <property type="project" value="UniProtKB-KW"/>
</dbReference>
<dbReference type="GO" id="GO:0006897">
    <property type="term" value="P:endocytosis"/>
    <property type="evidence" value="ECO:0000304"/>
    <property type="project" value="ProtInc"/>
</dbReference>
<dbReference type="GO" id="GO:0006893">
    <property type="term" value="P:Golgi to plasma membrane transport"/>
    <property type="evidence" value="ECO:0000250"/>
    <property type="project" value="UniProtKB"/>
</dbReference>
<dbReference type="GO" id="GO:0061025">
    <property type="term" value="P:membrane fusion"/>
    <property type="evidence" value="ECO:0000304"/>
    <property type="project" value="ProtInc"/>
</dbReference>
<dbReference type="GO" id="GO:1903441">
    <property type="term" value="P:protein localization to ciliary membrane"/>
    <property type="evidence" value="ECO:0000250"/>
    <property type="project" value="UniProtKB"/>
</dbReference>
<dbReference type="GO" id="GO:0015031">
    <property type="term" value="P:protein transport"/>
    <property type="evidence" value="ECO:0007669"/>
    <property type="project" value="UniProtKB-KW"/>
</dbReference>
<dbReference type="GO" id="GO:0099149">
    <property type="term" value="P:regulation of postsynaptic neurotransmitter receptor internalization"/>
    <property type="evidence" value="ECO:0007669"/>
    <property type="project" value="Ensembl"/>
</dbReference>
<dbReference type="GO" id="GO:0016192">
    <property type="term" value="P:vesicle-mediated transport"/>
    <property type="evidence" value="ECO:0000315"/>
    <property type="project" value="UniProtKB"/>
</dbReference>
<dbReference type="FunFam" id="1.20.5.340:FF:000022">
    <property type="entry name" value="Rabaptin, RAB GTPase-binding effector protein 1"/>
    <property type="match status" value="1"/>
</dbReference>
<dbReference type="FunFam" id="1.20.5.730:FF:000002">
    <property type="entry name" value="Rabaptin, RAB GTPase-binding effector protein 1"/>
    <property type="match status" value="1"/>
</dbReference>
<dbReference type="Gene3D" id="1.20.5.340">
    <property type="match status" value="1"/>
</dbReference>
<dbReference type="Gene3D" id="1.20.5.730">
    <property type="entry name" value="Single helix bin"/>
    <property type="match status" value="1"/>
</dbReference>
<dbReference type="InterPro" id="IPR003914">
    <property type="entry name" value="Rabaptin"/>
</dbReference>
<dbReference type="InterPro" id="IPR018514">
    <property type="entry name" value="Rabaptin_coiled-coil"/>
</dbReference>
<dbReference type="InterPro" id="IPR015390">
    <property type="entry name" value="Rabaptin_Rab5-bd_dom"/>
</dbReference>
<dbReference type="PANTHER" id="PTHR31179">
    <property type="entry name" value="RAB GTPASE-BINDING EFFECTOR PROTEIN"/>
    <property type="match status" value="1"/>
</dbReference>
<dbReference type="PANTHER" id="PTHR31179:SF5">
    <property type="entry name" value="RAB GTPASE-BINDING EFFECTOR PROTEIN 1"/>
    <property type="match status" value="1"/>
</dbReference>
<dbReference type="Pfam" id="PF09311">
    <property type="entry name" value="Rab5-bind"/>
    <property type="match status" value="1"/>
</dbReference>
<dbReference type="Pfam" id="PF03528">
    <property type="entry name" value="Rabaptin"/>
    <property type="match status" value="1"/>
</dbReference>
<dbReference type="PRINTS" id="PR01432">
    <property type="entry name" value="RABAPTIN"/>
</dbReference>
<dbReference type="SUPFAM" id="SSF103652">
    <property type="entry name" value="G protein-binding domain"/>
    <property type="match status" value="2"/>
</dbReference>
<gene>
    <name type="primary">RABEP1</name>
    <name type="synonym">RAB5EP</name>
    <name type="synonym">RABPT5</name>
    <name type="synonym">RABPT5A</name>
</gene>
<proteinExistence type="evidence at protein level"/>